<name>FOCAD_HUMAN</name>
<gene>
    <name evidence="11" type="primary">FOCAD</name>
    <name type="synonym">KIAA1797</name>
</gene>
<accession>Q5VW36</accession>
<accession>D3DRJ9</accession>
<accession>Q6ZME1</accession>
<accession>Q8IZG0</accession>
<accession>Q96JM8</accession>
<accession>Q96MS9</accession>
<accession>Q9BVF3</accession>
<accession>Q9NX87</accession>
<comment type="function">
    <text evidence="1 6 7">Required for the maintenance of SKIC2 and SKIC3 proteostatic levels in the liver. May be involved in the regulation of RNA degradation by the exosome complex (PubMed:35864190). Potential tumor suppressor in gliomas.</text>
</comment>
<comment type="subunit">
    <text evidence="6">Interacts with VCL.</text>
</comment>
<comment type="subcellular location">
    <subcellularLocation>
        <location evidence="6">Cell junction</location>
        <location evidence="6">Focal adhesion</location>
    </subcellularLocation>
    <subcellularLocation>
        <location evidence="7">Cytoplasm</location>
        <location evidence="7">Cytosol</location>
    </subcellularLocation>
    <text evidence="6 7">In astrocytes, colocalizes with VCL to the end of actin stress fibers, which normally terminate at focal adhesions. In hepatocytes, it is found in the cytosol.</text>
</comment>
<comment type="tissue specificity">
    <text evidence="5 6">Ubiquitous. High expression in brain followed by testis, muscle, pancreas, heart, ovary, small intestine, placenta, prostate, thymus, kidney, colon, liver, lung, spleen and leukocytes. Expression is reduced in most glioblastomas and all glioblastoma cell lines.</text>
</comment>
<comment type="disease" evidence="7">
    <disease id="DI-06479">
        <name>Liver disease, severe congenital</name>
        <acronym>SCOLIV</acronym>
        <description>An autosomal recessive disease characterized by severe neonatal liver cirrhosis and progressive hepatic dysfunction. Affected individuals have feeding difficulties, poor overall growth, and failure to thrive with signs of malnutrition. Additional features include jaundice, abdominal distension, hepatomegaly or hepatosplenomegaly, and ascites in most patients.</description>
        <dbReference type="MIM" id="619991"/>
    </disease>
    <text>The disease is caused by variants affecting the gene represented in this entry.</text>
</comment>
<comment type="caution">
    <text evidence="7">Focadhesin is predicted to contain three transmembrane domains. However, experimental data indicate that it does not localize to organelles with bilayered lipid membranes, challenging the presence of the transmembrane domains.</text>
</comment>
<comment type="sequence caution" evidence="9">
    <conflict type="erroneous initiation">
        <sequence resource="EMBL-CDS" id="BAA91129"/>
    </conflict>
    <text>Truncated N-terminus.</text>
</comment>
<comment type="sequence caution" evidence="9">
    <conflict type="frameshift">
        <sequence resource="EMBL-CDS" id="BAA91129"/>
    </conflict>
</comment>
<comment type="sequence caution" evidence="9">
    <conflict type="erroneous initiation">
        <sequence resource="EMBL-CDS" id="BAD18787"/>
    </conflict>
    <text>Truncated N-terminus.</text>
</comment>
<keyword id="KW-0007">Acetylation</keyword>
<keyword id="KW-0965">Cell junction</keyword>
<keyword id="KW-0963">Cytoplasm</keyword>
<keyword id="KW-0225">Disease variant</keyword>
<keyword id="KW-1267">Proteomics identification</keyword>
<keyword id="KW-1185">Reference proteome</keyword>
<reference key="1">
    <citation type="submission" date="2002-08" db="EMBL/GenBank/DDBJ databases">
        <authorList>
            <person name="Guo J.H."/>
            <person name="Chen L."/>
            <person name="Yu L."/>
        </authorList>
    </citation>
    <scope>NUCLEOTIDE SEQUENCE [LARGE SCALE MRNA]</scope>
    <scope>VARIANT GLU-1668</scope>
    <source>
        <tissue>Brain</tissue>
    </source>
</reference>
<reference key="2">
    <citation type="journal article" date="2004" name="Nature">
        <title>DNA sequence and analysis of human chromosome 9.</title>
        <authorList>
            <person name="Humphray S.J."/>
            <person name="Oliver K."/>
            <person name="Hunt A.R."/>
            <person name="Plumb R.W."/>
            <person name="Loveland J.E."/>
            <person name="Howe K.L."/>
            <person name="Andrews T.D."/>
            <person name="Searle S."/>
            <person name="Hunt S.E."/>
            <person name="Scott C.E."/>
            <person name="Jones M.C."/>
            <person name="Ainscough R."/>
            <person name="Almeida J.P."/>
            <person name="Ambrose K.D."/>
            <person name="Ashwell R.I.S."/>
            <person name="Babbage A.K."/>
            <person name="Babbage S."/>
            <person name="Bagguley C.L."/>
            <person name="Bailey J."/>
            <person name="Banerjee R."/>
            <person name="Barker D.J."/>
            <person name="Barlow K.F."/>
            <person name="Bates K."/>
            <person name="Beasley H."/>
            <person name="Beasley O."/>
            <person name="Bird C.P."/>
            <person name="Bray-Allen S."/>
            <person name="Brown A.J."/>
            <person name="Brown J.Y."/>
            <person name="Burford D."/>
            <person name="Burrill W."/>
            <person name="Burton J."/>
            <person name="Carder C."/>
            <person name="Carter N.P."/>
            <person name="Chapman J.C."/>
            <person name="Chen Y."/>
            <person name="Clarke G."/>
            <person name="Clark S.Y."/>
            <person name="Clee C.M."/>
            <person name="Clegg S."/>
            <person name="Collier R.E."/>
            <person name="Corby N."/>
            <person name="Crosier M."/>
            <person name="Cummings A.T."/>
            <person name="Davies J."/>
            <person name="Dhami P."/>
            <person name="Dunn M."/>
            <person name="Dutta I."/>
            <person name="Dyer L.W."/>
            <person name="Earthrowl M.E."/>
            <person name="Faulkner L."/>
            <person name="Fleming C.J."/>
            <person name="Frankish A."/>
            <person name="Frankland J.A."/>
            <person name="French L."/>
            <person name="Fricker D.G."/>
            <person name="Garner P."/>
            <person name="Garnett J."/>
            <person name="Ghori J."/>
            <person name="Gilbert J.G.R."/>
            <person name="Glison C."/>
            <person name="Grafham D.V."/>
            <person name="Gribble S."/>
            <person name="Griffiths C."/>
            <person name="Griffiths-Jones S."/>
            <person name="Grocock R."/>
            <person name="Guy J."/>
            <person name="Hall R.E."/>
            <person name="Hammond S."/>
            <person name="Harley J.L."/>
            <person name="Harrison E.S.I."/>
            <person name="Hart E.A."/>
            <person name="Heath P.D."/>
            <person name="Henderson C.D."/>
            <person name="Hopkins B.L."/>
            <person name="Howard P.J."/>
            <person name="Howden P.J."/>
            <person name="Huckle E."/>
            <person name="Johnson C."/>
            <person name="Johnson D."/>
            <person name="Joy A.A."/>
            <person name="Kay M."/>
            <person name="Keenan S."/>
            <person name="Kershaw J.K."/>
            <person name="Kimberley A.M."/>
            <person name="King A."/>
            <person name="Knights A."/>
            <person name="Laird G.K."/>
            <person name="Langford C."/>
            <person name="Lawlor S."/>
            <person name="Leongamornlert D.A."/>
            <person name="Leversha M."/>
            <person name="Lloyd C."/>
            <person name="Lloyd D.M."/>
            <person name="Lovell J."/>
            <person name="Martin S."/>
            <person name="Mashreghi-Mohammadi M."/>
            <person name="Matthews L."/>
            <person name="McLaren S."/>
            <person name="McLay K.E."/>
            <person name="McMurray A."/>
            <person name="Milne S."/>
            <person name="Nickerson T."/>
            <person name="Nisbett J."/>
            <person name="Nordsiek G."/>
            <person name="Pearce A.V."/>
            <person name="Peck A.I."/>
            <person name="Porter K.M."/>
            <person name="Pandian R."/>
            <person name="Pelan S."/>
            <person name="Phillimore B."/>
            <person name="Povey S."/>
            <person name="Ramsey Y."/>
            <person name="Rand V."/>
            <person name="Scharfe M."/>
            <person name="Sehra H.K."/>
            <person name="Shownkeen R."/>
            <person name="Sims S.K."/>
            <person name="Skuce C.D."/>
            <person name="Smith M."/>
            <person name="Steward C.A."/>
            <person name="Swarbreck D."/>
            <person name="Sycamore N."/>
            <person name="Tester J."/>
            <person name="Thorpe A."/>
            <person name="Tracey A."/>
            <person name="Tromans A."/>
            <person name="Thomas D.W."/>
            <person name="Wall M."/>
            <person name="Wallis J.M."/>
            <person name="West A.P."/>
            <person name="Whitehead S.L."/>
            <person name="Willey D.L."/>
            <person name="Williams S.A."/>
            <person name="Wilming L."/>
            <person name="Wray P.W."/>
            <person name="Young L."/>
            <person name="Ashurst J.L."/>
            <person name="Coulson A."/>
            <person name="Blocker H."/>
            <person name="Durbin R.M."/>
            <person name="Sulston J.E."/>
            <person name="Hubbard T."/>
            <person name="Jackson M.J."/>
            <person name="Bentley D.R."/>
            <person name="Beck S."/>
            <person name="Rogers J."/>
            <person name="Dunham I."/>
        </authorList>
    </citation>
    <scope>NUCLEOTIDE SEQUENCE [LARGE SCALE GENOMIC DNA]</scope>
</reference>
<reference key="3">
    <citation type="submission" date="2005-09" db="EMBL/GenBank/DDBJ databases">
        <authorList>
            <person name="Mural R.J."/>
            <person name="Istrail S."/>
            <person name="Sutton G.G."/>
            <person name="Florea L."/>
            <person name="Halpern A.L."/>
            <person name="Mobarry C.M."/>
            <person name="Lippert R."/>
            <person name="Walenz B."/>
            <person name="Shatkay H."/>
            <person name="Dew I."/>
            <person name="Miller J.R."/>
            <person name="Flanigan M.J."/>
            <person name="Edwards N.J."/>
            <person name="Bolanos R."/>
            <person name="Fasulo D."/>
            <person name="Halldorsson B.V."/>
            <person name="Hannenhalli S."/>
            <person name="Turner R."/>
            <person name="Yooseph S."/>
            <person name="Lu F."/>
            <person name="Nusskern D.R."/>
            <person name="Shue B.C."/>
            <person name="Zheng X.H."/>
            <person name="Zhong F."/>
            <person name="Delcher A.L."/>
            <person name="Huson D.H."/>
            <person name="Kravitz S.A."/>
            <person name="Mouchard L."/>
            <person name="Reinert K."/>
            <person name="Remington K.A."/>
            <person name="Clark A.G."/>
            <person name="Waterman M.S."/>
            <person name="Eichler E.E."/>
            <person name="Adams M.D."/>
            <person name="Hunkapiller M.W."/>
            <person name="Myers E.W."/>
            <person name="Venter J.C."/>
        </authorList>
    </citation>
    <scope>NUCLEOTIDE SEQUENCE [LARGE SCALE GENOMIC DNA]</scope>
</reference>
<reference key="4">
    <citation type="journal article" date="2004" name="Nat. Genet.">
        <title>Complete sequencing and characterization of 21,243 full-length human cDNAs.</title>
        <authorList>
            <person name="Ota T."/>
            <person name="Suzuki Y."/>
            <person name="Nishikawa T."/>
            <person name="Otsuki T."/>
            <person name="Sugiyama T."/>
            <person name="Irie R."/>
            <person name="Wakamatsu A."/>
            <person name="Hayashi K."/>
            <person name="Sato H."/>
            <person name="Nagai K."/>
            <person name="Kimura K."/>
            <person name="Makita H."/>
            <person name="Sekine M."/>
            <person name="Obayashi M."/>
            <person name="Nishi T."/>
            <person name="Shibahara T."/>
            <person name="Tanaka T."/>
            <person name="Ishii S."/>
            <person name="Yamamoto J."/>
            <person name="Saito K."/>
            <person name="Kawai Y."/>
            <person name="Isono Y."/>
            <person name="Nakamura Y."/>
            <person name="Nagahari K."/>
            <person name="Murakami K."/>
            <person name="Yasuda T."/>
            <person name="Iwayanagi T."/>
            <person name="Wagatsuma M."/>
            <person name="Shiratori A."/>
            <person name="Sudo H."/>
            <person name="Hosoiri T."/>
            <person name="Kaku Y."/>
            <person name="Kodaira H."/>
            <person name="Kondo H."/>
            <person name="Sugawara M."/>
            <person name="Takahashi M."/>
            <person name="Kanda K."/>
            <person name="Yokoi T."/>
            <person name="Furuya T."/>
            <person name="Kikkawa E."/>
            <person name="Omura Y."/>
            <person name="Abe K."/>
            <person name="Kamihara K."/>
            <person name="Katsuta N."/>
            <person name="Sato K."/>
            <person name="Tanikawa M."/>
            <person name="Yamazaki M."/>
            <person name="Ninomiya K."/>
            <person name="Ishibashi T."/>
            <person name="Yamashita H."/>
            <person name="Murakawa K."/>
            <person name="Fujimori K."/>
            <person name="Tanai H."/>
            <person name="Kimata M."/>
            <person name="Watanabe M."/>
            <person name="Hiraoka S."/>
            <person name="Chiba Y."/>
            <person name="Ishida S."/>
            <person name="Ono Y."/>
            <person name="Takiguchi S."/>
            <person name="Watanabe S."/>
            <person name="Yosida M."/>
            <person name="Hotuta T."/>
            <person name="Kusano J."/>
            <person name="Kanehori K."/>
            <person name="Takahashi-Fujii A."/>
            <person name="Hara H."/>
            <person name="Tanase T.-O."/>
            <person name="Nomura Y."/>
            <person name="Togiya S."/>
            <person name="Komai F."/>
            <person name="Hara R."/>
            <person name="Takeuchi K."/>
            <person name="Arita M."/>
            <person name="Imose N."/>
            <person name="Musashino K."/>
            <person name="Yuuki H."/>
            <person name="Oshima A."/>
            <person name="Sasaki N."/>
            <person name="Aotsuka S."/>
            <person name="Yoshikawa Y."/>
            <person name="Matsunawa H."/>
            <person name="Ichihara T."/>
            <person name="Shiohata N."/>
            <person name="Sano S."/>
            <person name="Moriya S."/>
            <person name="Momiyama H."/>
            <person name="Satoh N."/>
            <person name="Takami S."/>
            <person name="Terashima Y."/>
            <person name="Suzuki O."/>
            <person name="Nakagawa S."/>
            <person name="Senoh A."/>
            <person name="Mizoguchi H."/>
            <person name="Goto Y."/>
            <person name="Shimizu F."/>
            <person name="Wakebe H."/>
            <person name="Hishigaki H."/>
            <person name="Watanabe T."/>
            <person name="Sugiyama A."/>
            <person name="Takemoto M."/>
            <person name="Kawakami B."/>
            <person name="Yamazaki M."/>
            <person name="Watanabe K."/>
            <person name="Kumagai A."/>
            <person name="Itakura S."/>
            <person name="Fukuzumi Y."/>
            <person name="Fujimori Y."/>
            <person name="Komiyama M."/>
            <person name="Tashiro H."/>
            <person name="Tanigami A."/>
            <person name="Fujiwara T."/>
            <person name="Ono T."/>
            <person name="Yamada K."/>
            <person name="Fujii Y."/>
            <person name="Ozaki K."/>
            <person name="Hirao M."/>
            <person name="Ohmori Y."/>
            <person name="Kawabata A."/>
            <person name="Hikiji T."/>
            <person name="Kobatake N."/>
            <person name="Inagaki H."/>
            <person name="Ikema Y."/>
            <person name="Okamoto S."/>
            <person name="Okitani R."/>
            <person name="Kawakami T."/>
            <person name="Noguchi S."/>
            <person name="Itoh T."/>
            <person name="Shigeta K."/>
            <person name="Senba T."/>
            <person name="Matsumura K."/>
            <person name="Nakajima Y."/>
            <person name="Mizuno T."/>
            <person name="Morinaga M."/>
            <person name="Sasaki M."/>
            <person name="Togashi T."/>
            <person name="Oyama M."/>
            <person name="Hata H."/>
            <person name="Watanabe M."/>
            <person name="Komatsu T."/>
            <person name="Mizushima-Sugano J."/>
            <person name="Satoh T."/>
            <person name="Shirai Y."/>
            <person name="Takahashi Y."/>
            <person name="Nakagawa K."/>
            <person name="Okumura K."/>
            <person name="Nagase T."/>
            <person name="Nomura N."/>
            <person name="Kikuchi H."/>
            <person name="Masuho Y."/>
            <person name="Yamashita R."/>
            <person name="Nakai K."/>
            <person name="Yada T."/>
            <person name="Nakamura Y."/>
            <person name="Ohara O."/>
            <person name="Isogai T."/>
            <person name="Sugano S."/>
        </authorList>
    </citation>
    <scope>NUCLEOTIDE SEQUENCE [LARGE SCALE MRNA] OF 1-915 AND 1305-1801</scope>
    <scope>VARIANTS ALA-1373 AND GLU-1668</scope>
    <source>
        <tissue>Endothelial cell</tissue>
        <tissue>Hepatoma</tissue>
        <tissue>Teratocarcinoma</tissue>
    </source>
</reference>
<reference key="5">
    <citation type="journal article" date="2001" name="DNA Res.">
        <title>Prediction of the coding sequences of unidentified human genes. XX. The complete sequences of 100 new cDNA clones from brain which code for large proteins in vitro.</title>
        <authorList>
            <person name="Nagase T."/>
            <person name="Nakayama M."/>
            <person name="Nakajima D."/>
            <person name="Kikuno R."/>
            <person name="Ohara O."/>
        </authorList>
    </citation>
    <scope>NUCLEOTIDE SEQUENCE [LARGE SCALE MRNA] OF 521-1801</scope>
    <scope>VARIANT GLU-1668</scope>
    <source>
        <tissue>Brain</tissue>
    </source>
</reference>
<reference key="6">
    <citation type="journal article" date="2004" name="Genome Res.">
        <title>The status, quality, and expansion of the NIH full-length cDNA project: the Mammalian Gene Collection (MGC).</title>
        <authorList>
            <consortium name="The MGC Project Team"/>
        </authorList>
    </citation>
    <scope>NUCLEOTIDE SEQUENCE [LARGE SCALE MRNA] OF 1300-1801</scope>
    <scope>VARIANT GLU-1668</scope>
    <source>
        <tissue>Choriocarcinoma</tissue>
    </source>
</reference>
<reference key="7">
    <citation type="journal article" date="2006" name="J. Biomed. Biotechnol.">
        <title>L1 antisense promoter drives tissue-specific transcription of human genes.</title>
        <authorList>
            <person name="Matlik K."/>
            <person name="Redik K."/>
            <person name="Speek M."/>
        </authorList>
    </citation>
    <scope>TISSUE SPECIFICITY</scope>
</reference>
<reference key="8">
    <citation type="journal article" date="2009" name="Science">
        <title>Lysine acetylation targets protein complexes and co-regulates major cellular functions.</title>
        <authorList>
            <person name="Choudhary C."/>
            <person name="Kumar C."/>
            <person name="Gnad F."/>
            <person name="Nielsen M.L."/>
            <person name="Rehman M."/>
            <person name="Walther T.C."/>
            <person name="Olsen J.V."/>
            <person name="Mann M."/>
        </authorList>
    </citation>
    <scope>ACETYLATION [LARGE SCALE ANALYSIS] AT LYS-819</scope>
    <scope>IDENTIFICATION BY MASS SPECTROMETRY [LARGE SCALE ANALYSIS]</scope>
</reference>
<reference key="9">
    <citation type="journal article" date="2011" name="BMC Syst. Biol.">
        <title>Initial characterization of the human central proteome.</title>
        <authorList>
            <person name="Burkard T.R."/>
            <person name="Planyavsky M."/>
            <person name="Kaupe I."/>
            <person name="Breitwieser F.P."/>
            <person name="Buerckstuemmer T."/>
            <person name="Bennett K.L."/>
            <person name="Superti-Furga G."/>
            <person name="Colinge J."/>
        </authorList>
    </citation>
    <scope>IDENTIFICATION BY MASS SPECTROMETRY [LARGE SCALE ANALYSIS]</scope>
</reference>
<reference key="10">
    <citation type="journal article" date="2012" name="Brain">
        <title>KIAA1797/FOCAD encodes a novel focal adhesion protein with tumour suppressor function in gliomas.</title>
        <authorList>
            <person name="Brockschmidt A."/>
            <person name="Trost D."/>
            <person name="Peterziel H."/>
            <person name="Zimmermann K."/>
            <person name="Ehrler M."/>
            <person name="Grassmann H."/>
            <person name="Pfenning P.N."/>
            <person name="Waha A."/>
            <person name="Wohlleber D."/>
            <person name="Brockschmidt F.F."/>
            <person name="Jugold M."/>
            <person name="Hoischen A."/>
            <person name="Kalla C."/>
            <person name="Waha A."/>
            <person name="Seifert G."/>
            <person name="Knolle P.A."/>
            <person name="Latz E."/>
            <person name="Hans V.H."/>
            <person name="Wick W."/>
            <person name="Pfeifer A."/>
            <person name="Angel P."/>
            <person name="Weber R.G."/>
        </authorList>
    </citation>
    <scope>TISSUE SPECIFICITY</scope>
    <scope>SUBCELLULAR LOCATION</scope>
    <scope>INTERACTION WITH VCL</scope>
    <scope>FUNCTION</scope>
</reference>
<reference key="11">
    <citation type="journal article" date="2022" name="Nat. Genet.">
        <title>Loss of FOCAD, operating via the SKI messenger RNA surveillance pathway, causes a pediatric syndrome with liver cirrhosis.</title>
        <authorList>
            <person name="Moreno Traspas R."/>
            <person name="Teoh T.S."/>
            <person name="Wong P.M."/>
            <person name="Maier M."/>
            <person name="Chia C.Y."/>
            <person name="Lay K."/>
            <person name="Ali N.A."/>
            <person name="Larson A."/>
            <person name="Al Mutairi F."/>
            <person name="Al-Sannaa N.A."/>
            <person name="Faqeih E.A."/>
            <person name="Alfadhel M."/>
            <person name="Cheema H.A."/>
            <person name="Dupont J."/>
            <person name="Bezieau S."/>
            <person name="Isidor B."/>
            <person name="Low D.Y."/>
            <person name="Wang Y."/>
            <person name="Tan G."/>
            <person name="Lai P.S."/>
            <person name="Piloquet H."/>
            <person name="Joubert M."/>
            <person name="Kayserili H."/>
            <person name="Kripps K.A."/>
            <person name="Nahas S.A."/>
            <person name="Wartchow E.P."/>
            <person name="Warren M."/>
            <person name="Bhavani G.S."/>
            <person name="Dasouki M."/>
            <person name="Sandoval R."/>
            <person name="Carvalho E."/>
            <person name="Ramos L."/>
            <person name="Porta G."/>
            <person name="Wu B."/>
            <person name="Lashkari H.P."/>
            <person name="Al-Saleem B."/>
            <person name="Ba-Abbad R.M."/>
            <person name="Abreu Ferrao A.N."/>
            <person name="Karageorgou V."/>
            <person name="Ordonez-Herrera N."/>
            <person name="Khan S."/>
            <person name="Bauer P."/>
            <person name="Cogne B."/>
            <person name="Bertoli-Avella A.M."/>
            <person name="Vincent M."/>
            <person name="Girisha K.M."/>
            <person name="Reversade B."/>
        </authorList>
    </citation>
    <scope>FUNCTION</scope>
    <scope>SUBCELLULAR LOCATION</scope>
    <scope>INVOLVEMENT IN SCOLIV</scope>
    <scope>VARIANTS SCOLIV 154-GLN--TRP-1801 DEL; 195-ARG--TRP-1801 DEL; CYS-563; 863-ARG--TRP-1801 DEL; ARG-1177; PRO-1232; ASN-1668 AND PRO-1780</scope>
</reference>
<proteinExistence type="evidence at protein level"/>
<protein>
    <recommendedName>
        <fullName evidence="10">Focadhesin</fullName>
    </recommendedName>
</protein>
<feature type="chain" id="PRO_0000314457" description="Focadhesin">
    <location>
        <begin position="1"/>
        <end position="1801"/>
    </location>
</feature>
<feature type="modified residue" description="N6-acetyllysine" evidence="12">
    <location>
        <position position="819"/>
    </location>
</feature>
<feature type="sequence variant" id="VAR_087617" description="In SCOLIV." evidence="7">
    <location>
        <begin position="154"/>
        <end position="1801"/>
    </location>
</feature>
<feature type="sequence variant" id="VAR_037877" description="In dbSNP:rs10511687.">
    <original>L</original>
    <variation>S</variation>
    <location>
        <position position="166"/>
    </location>
</feature>
<feature type="sequence variant" id="VAR_087618" description="In SCOLIV." evidence="7">
    <location>
        <begin position="195"/>
        <end position="1801"/>
    </location>
</feature>
<feature type="sequence variant" id="VAR_037878" description="In dbSNP:rs10441706.">
    <original>V</original>
    <variation>I</variation>
    <location>
        <position position="234"/>
    </location>
</feature>
<feature type="sequence variant" id="VAR_037879" description="In dbSNP:rs17832431.">
    <original>I</original>
    <variation>V</variation>
    <location>
        <position position="523"/>
    </location>
</feature>
<feature type="sequence variant" id="VAR_087619" description="In SCOLIV; associated in cis with P-1232; uncertain significance." evidence="7">
    <original>R</original>
    <variation>C</variation>
    <location>
        <position position="563"/>
    </location>
</feature>
<feature type="sequence variant" id="VAR_037880" description="In dbSNP:rs7875872.">
    <original>S</original>
    <variation>T</variation>
    <location>
        <position position="718"/>
    </location>
</feature>
<feature type="sequence variant" id="VAR_049528" description="In dbSNP:rs10964742.">
    <original>E</original>
    <variation>K</variation>
    <location>
        <position position="721"/>
    </location>
</feature>
<feature type="sequence variant" id="VAR_087620" description="In SCOLIV." evidence="7">
    <location>
        <begin position="863"/>
        <end position="1801"/>
    </location>
</feature>
<feature type="sequence variant" id="VAR_087621" description="In SCOLIV; uncertain significance." evidence="7">
    <original>G</original>
    <variation>R</variation>
    <location>
        <position position="1177"/>
    </location>
</feature>
<feature type="sequence variant" id="VAR_087622" description="In SCOLIV; associated in cis with C-563; uncertain significance." evidence="7">
    <original>A</original>
    <variation>P</variation>
    <location>
        <position position="1232"/>
    </location>
</feature>
<feature type="sequence variant" id="VAR_061251" description="In dbSNP:rs3206852." evidence="3">
    <original>T</original>
    <variation>A</variation>
    <location>
        <position position="1373"/>
    </location>
</feature>
<feature type="sequence variant" id="VAR_037881" description="In dbSNP:rs3206852.">
    <original>T</original>
    <variation>P</variation>
    <location>
        <position position="1373"/>
    </location>
</feature>
<feature type="sequence variant" id="VAR_061252" description="In dbSNP:rs3206852.">
    <original>T</original>
    <variation>S</variation>
    <location>
        <position position="1373"/>
    </location>
</feature>
<feature type="sequence variant" id="VAR_037882" description="In dbSNP:rs4977881." evidence="2 3 4 8">
    <original>K</original>
    <variation>E</variation>
    <location>
        <position position="1668"/>
    </location>
</feature>
<feature type="sequence variant" id="VAR_087623" description="In SCOLIV; uncertain significance." evidence="7">
    <original>K</original>
    <variation>N</variation>
    <location>
        <position position="1668"/>
    </location>
</feature>
<feature type="sequence variant" id="VAR_087624" description="In SCOLIV; uncertain significance." evidence="7">
    <original>L</original>
    <variation>P</variation>
    <location>
        <position position="1780"/>
    </location>
</feature>
<feature type="sequence conflict" description="In Ref. 1; AAN17740 and 4; BAB71203." evidence="9" ref="1 4">
    <original>A</original>
    <variation>V</variation>
    <location>
        <position position="481"/>
    </location>
</feature>
<feature type="sequence conflict" description="In Ref. 6; AAH01246." evidence="9" ref="6">
    <original>E</original>
    <variation>D</variation>
    <location>
        <position position="1430"/>
    </location>
</feature>
<evidence type="ECO:0000250" key="1"/>
<evidence type="ECO:0000269" key="2">
    <source>
    </source>
</evidence>
<evidence type="ECO:0000269" key="3">
    <source>
    </source>
</evidence>
<evidence type="ECO:0000269" key="4">
    <source>
    </source>
</evidence>
<evidence type="ECO:0000269" key="5">
    <source>
    </source>
</evidence>
<evidence type="ECO:0000269" key="6">
    <source>
    </source>
</evidence>
<evidence type="ECO:0000269" key="7">
    <source>
    </source>
</evidence>
<evidence type="ECO:0000269" key="8">
    <source ref="1"/>
</evidence>
<evidence type="ECO:0000305" key="9"/>
<evidence type="ECO:0000305" key="10">
    <source>
    </source>
</evidence>
<evidence type="ECO:0000312" key="11">
    <source>
        <dbReference type="HGNC" id="HGNC:23377"/>
    </source>
</evidence>
<evidence type="ECO:0007744" key="12">
    <source>
    </source>
</evidence>
<organism>
    <name type="scientific">Homo sapiens</name>
    <name type="common">Human</name>
    <dbReference type="NCBI Taxonomy" id="9606"/>
    <lineage>
        <taxon>Eukaryota</taxon>
        <taxon>Metazoa</taxon>
        <taxon>Chordata</taxon>
        <taxon>Craniata</taxon>
        <taxon>Vertebrata</taxon>
        <taxon>Euteleostomi</taxon>
        <taxon>Mammalia</taxon>
        <taxon>Eutheria</taxon>
        <taxon>Euarchontoglires</taxon>
        <taxon>Primates</taxon>
        <taxon>Haplorrhini</taxon>
        <taxon>Catarrhini</taxon>
        <taxon>Hominidae</taxon>
        <taxon>Homo</taxon>
    </lineage>
</organism>
<dbReference type="EMBL" id="AY139834">
    <property type="protein sequence ID" value="AAN17740.1"/>
    <property type="molecule type" value="mRNA"/>
</dbReference>
<dbReference type="EMBL" id="AL392163">
    <property type="status" value="NOT_ANNOTATED_CDS"/>
    <property type="molecule type" value="Genomic_DNA"/>
</dbReference>
<dbReference type="EMBL" id="AL445624">
    <property type="status" value="NOT_ANNOTATED_CDS"/>
    <property type="molecule type" value="Genomic_DNA"/>
</dbReference>
<dbReference type="EMBL" id="AL662879">
    <property type="status" value="NOT_ANNOTATED_CDS"/>
    <property type="molecule type" value="Genomic_DNA"/>
</dbReference>
<dbReference type="EMBL" id="CH471071">
    <property type="protein sequence ID" value="EAW58627.1"/>
    <property type="molecule type" value="Genomic_DNA"/>
</dbReference>
<dbReference type="EMBL" id="CH471071">
    <property type="protein sequence ID" value="EAW58628.1"/>
    <property type="molecule type" value="Genomic_DNA"/>
</dbReference>
<dbReference type="EMBL" id="CH471071">
    <property type="protein sequence ID" value="EAW58629.1"/>
    <property type="molecule type" value="Genomic_DNA"/>
</dbReference>
<dbReference type="EMBL" id="AK000382">
    <property type="protein sequence ID" value="BAA91129.1"/>
    <property type="status" value="ALT_FRAME"/>
    <property type="molecule type" value="mRNA"/>
</dbReference>
<dbReference type="EMBL" id="AK056522">
    <property type="protein sequence ID" value="BAB71203.1"/>
    <property type="molecule type" value="mRNA"/>
</dbReference>
<dbReference type="EMBL" id="AK172818">
    <property type="protein sequence ID" value="BAD18787.1"/>
    <property type="status" value="ALT_INIT"/>
    <property type="molecule type" value="mRNA"/>
</dbReference>
<dbReference type="EMBL" id="AB058700">
    <property type="protein sequence ID" value="BAB47426.1"/>
    <property type="molecule type" value="mRNA"/>
</dbReference>
<dbReference type="EMBL" id="BC001246">
    <property type="protein sequence ID" value="AAH01246.2"/>
    <property type="molecule type" value="mRNA"/>
</dbReference>
<dbReference type="CCDS" id="CCDS34993.1"/>
<dbReference type="RefSeq" id="NP_001362496.1">
    <property type="nucleotide sequence ID" value="NM_001375567.1"/>
</dbReference>
<dbReference type="RefSeq" id="NP_060264.4">
    <property type="nucleotide sequence ID" value="NM_017794.4"/>
</dbReference>
<dbReference type="RefSeq" id="XP_005251551.2">
    <property type="nucleotide sequence ID" value="XM_005251494.3"/>
</dbReference>
<dbReference type="RefSeq" id="XP_047279493.1">
    <property type="nucleotide sequence ID" value="XM_047423537.1"/>
</dbReference>
<dbReference type="RefSeq" id="XP_047279494.1">
    <property type="nucleotide sequence ID" value="XM_047423538.1"/>
</dbReference>
<dbReference type="BioGRID" id="120256">
    <property type="interactions" value="72"/>
</dbReference>
<dbReference type="FunCoup" id="Q5VW36">
    <property type="interactions" value="107"/>
</dbReference>
<dbReference type="IntAct" id="Q5VW36">
    <property type="interactions" value="47"/>
</dbReference>
<dbReference type="MINT" id="Q5VW36"/>
<dbReference type="STRING" id="9606.ENSP00000369599"/>
<dbReference type="GlyGen" id="Q5VW36">
    <property type="glycosylation" value="2 sites, 1 N-linked glycan (1 site)"/>
</dbReference>
<dbReference type="iPTMnet" id="Q5VW36"/>
<dbReference type="PhosphoSitePlus" id="Q5VW36"/>
<dbReference type="SwissPalm" id="Q5VW36"/>
<dbReference type="BioMuta" id="FOCAD"/>
<dbReference type="DMDM" id="74747342"/>
<dbReference type="jPOST" id="Q5VW36"/>
<dbReference type="MassIVE" id="Q5VW36"/>
<dbReference type="PaxDb" id="9606-ENSP00000369599"/>
<dbReference type="PeptideAtlas" id="Q5VW36"/>
<dbReference type="ProteomicsDB" id="65516"/>
<dbReference type="Pumba" id="Q5VW36"/>
<dbReference type="Antibodypedia" id="66171">
    <property type="antibodies" value="5 antibodies from 5 providers"/>
</dbReference>
<dbReference type="DNASU" id="54914"/>
<dbReference type="Ensembl" id="ENST00000338382.11">
    <property type="protein sequence ID" value="ENSP00000344307.6"/>
    <property type="gene ID" value="ENSG00000188352.13"/>
</dbReference>
<dbReference type="Ensembl" id="ENST00000380249.5">
    <property type="protein sequence ID" value="ENSP00000369599.1"/>
    <property type="gene ID" value="ENSG00000188352.13"/>
</dbReference>
<dbReference type="GeneID" id="54914"/>
<dbReference type="KEGG" id="hsa:54914"/>
<dbReference type="MANE-Select" id="ENST00000338382.11">
    <property type="protein sequence ID" value="ENSP00000344307.6"/>
    <property type="RefSeq nucleotide sequence ID" value="NM_001375567.1"/>
    <property type="RefSeq protein sequence ID" value="NP_001362496.1"/>
</dbReference>
<dbReference type="UCSC" id="uc003zog.2">
    <property type="organism name" value="human"/>
</dbReference>
<dbReference type="AGR" id="HGNC:23377"/>
<dbReference type="CTD" id="54914"/>
<dbReference type="DisGeNET" id="54914"/>
<dbReference type="GeneCards" id="FOCAD"/>
<dbReference type="HGNC" id="HGNC:23377">
    <property type="gene designation" value="FOCAD"/>
</dbReference>
<dbReference type="HPA" id="ENSG00000188352">
    <property type="expression patterns" value="Tissue enhanced (choroid)"/>
</dbReference>
<dbReference type="MalaCards" id="FOCAD"/>
<dbReference type="MIM" id="614606">
    <property type="type" value="gene"/>
</dbReference>
<dbReference type="MIM" id="619991">
    <property type="type" value="phenotype"/>
</dbReference>
<dbReference type="neXtProt" id="NX_Q5VW36"/>
<dbReference type="OpenTargets" id="ENSG00000188352"/>
<dbReference type="PharmGKB" id="PA134934777"/>
<dbReference type="VEuPathDB" id="HostDB:ENSG00000188352"/>
<dbReference type="eggNOG" id="ENOG502QQKG">
    <property type="taxonomic scope" value="Eukaryota"/>
</dbReference>
<dbReference type="GeneTree" id="ENSGT00390000004438"/>
<dbReference type="HOGENOM" id="CLU_002970_0_0_1"/>
<dbReference type="InParanoid" id="Q5VW36"/>
<dbReference type="OMA" id="GQLFSWF"/>
<dbReference type="OrthoDB" id="6125419at2759"/>
<dbReference type="PAN-GO" id="Q5VW36">
    <property type="GO annotations" value="0 GO annotations based on evolutionary models"/>
</dbReference>
<dbReference type="PhylomeDB" id="Q5VW36"/>
<dbReference type="TreeFam" id="TF323261"/>
<dbReference type="PathwayCommons" id="Q5VW36"/>
<dbReference type="SignaLink" id="Q5VW36"/>
<dbReference type="BioGRID-ORCS" id="54914">
    <property type="hits" value="21 hits in 1157 CRISPR screens"/>
</dbReference>
<dbReference type="ChiTaRS" id="FOCAD">
    <property type="organism name" value="human"/>
</dbReference>
<dbReference type="GeneWiki" id="KIAA1797"/>
<dbReference type="GenomeRNAi" id="54914"/>
<dbReference type="Pharos" id="Q5VW36">
    <property type="development level" value="Tbio"/>
</dbReference>
<dbReference type="PRO" id="PR:Q5VW36"/>
<dbReference type="Proteomes" id="UP000005640">
    <property type="component" value="Chromosome 9"/>
</dbReference>
<dbReference type="RNAct" id="Q5VW36">
    <property type="molecule type" value="protein"/>
</dbReference>
<dbReference type="Bgee" id="ENSG00000188352">
    <property type="expression patterns" value="Expressed in choroid plexus epithelium and 193 other cell types or tissues"/>
</dbReference>
<dbReference type="ExpressionAtlas" id="Q5VW36">
    <property type="expression patterns" value="baseline and differential"/>
</dbReference>
<dbReference type="GO" id="GO:0005829">
    <property type="term" value="C:cytosol"/>
    <property type="evidence" value="ECO:0000314"/>
    <property type="project" value="HPA"/>
</dbReference>
<dbReference type="GO" id="GO:0005925">
    <property type="term" value="C:focal adhesion"/>
    <property type="evidence" value="ECO:0000314"/>
    <property type="project" value="UniProtKB"/>
</dbReference>
<dbReference type="GO" id="GO:0060147">
    <property type="term" value="P:regulation of post-transcriptional gene silencing"/>
    <property type="evidence" value="ECO:0007669"/>
    <property type="project" value="InterPro"/>
</dbReference>
<dbReference type="InterPro" id="IPR016024">
    <property type="entry name" value="ARM-type_fold"/>
</dbReference>
<dbReference type="InterPro" id="IPR022542">
    <property type="entry name" value="FOCAD/RST1_DUF3730"/>
</dbReference>
<dbReference type="InterPro" id="IPR045163">
    <property type="entry name" value="Focadhesin/RST1"/>
</dbReference>
<dbReference type="InterPro" id="IPR021392">
    <property type="entry name" value="Focadhesin_C"/>
</dbReference>
<dbReference type="PANTHER" id="PTHR16212:SF4">
    <property type="entry name" value="FOCADHESIN"/>
    <property type="match status" value="1"/>
</dbReference>
<dbReference type="PANTHER" id="PTHR16212">
    <property type="entry name" value="FOCADHESIN FAMILY MEMBER"/>
    <property type="match status" value="1"/>
</dbReference>
<dbReference type="Pfam" id="PF12530">
    <property type="entry name" value="DUF3730"/>
    <property type="match status" value="1"/>
</dbReference>
<dbReference type="Pfam" id="PF11229">
    <property type="entry name" value="Focadhesin"/>
    <property type="match status" value="1"/>
</dbReference>
<dbReference type="SUPFAM" id="SSF48371">
    <property type="entry name" value="ARM repeat"/>
    <property type="match status" value="2"/>
</dbReference>
<sequence length="1801" mass="200058">MSDDIRKRFEFPNSLIQSQAVGHLIAAVLKENGFSEKIHQSTNQTPALNLLWEKCCSDNVVVRTACCEGLVALVAQDHAEFSYVLNGILNLIPSTRNTHGLIKAIMHLLQMQALKEGQGGEKNIQSIYTIRNHPHPLITVLEHRPDCWPVFLQQLTAFFQQCPERLEVSCIQIMAPFLWYLYCEPSQLQEYAKLRLALLKVLLQPQVLCDKDQPSILEQQILQLCCDIVPCLQVKDLIQTTEAMMFIEEVCLSLLRHPVFWKIQLTQMSLQLLCVSEVSLKITGECSSSIHLLEHSVELLKEDFPVELVIIGIALLLLQTPASQQKPILNLALKLLSVTEDQKIPKSSLLLVMPILQILSSTALEDCISVDEEGPSRQQLALNLLEMIQQECYRDDHQKLSYKLVCPVTSMYGTIFTAWRILEVMTDSSAASDWLASVESLLPITAVIPAPAFLLLAHLLVEDKGQNLHQILKVTTELAQADSSQVPNLIPVLMFKLGRPLEPILYNDILYTLPKLGVHKVCIGQILRIIQLLGTTPRLRAVTLRLLTSLWEKQDRVYPELQRFMAVSDVPSLSVGKEVQWEKLIAKAASIRDICKQRPYQHGADMLAAISQVLNECTKPDQATPAALVLQGLHALCQAEVVCIRSTWNALSPKLSCDTRPLILKTLSELFSLVPSLTVNTTEYENFKVQVLSFLWTHTQNKDPIVANAAYRSLANFSAGEHTILHLPEKIRPEIPIPEELDDDEDVEDVDLSVPGSCYLKLLSLTPPLVLPALEEFFTSLVKQEMVNMPRGIYHSALKGGARSDQGKTVAGIPNFILKMYETNKQPGLKPGLAGGMLFCYDVSMYQSKDGKPLNRLMASRGRSFKQTSLALVHEVHIQLSEWHRAIFLPQAWLAYMNRAYHAILQGRLGELELQLKHGKEEPEEVQYKKSTAWLWVRDMLTDEITKAAAKESPVVKGNALLALSSLAVVVSRHEASLSSDSDGLLEVQPNFLSMKEWVSMVLDTLLVIVDSHYQPRGQLLSWFYYKSYSGENTASAIARSAAATALSLLVPVFIISCKEKVEEILNMLTARLPGKPSADESQAVQIHMGLALGMFLSRLCEEKLSDISGQEMNLLLMKSLDALENCCFDTSLEYNTGCILGVGLVLSLMSHSSQMQSRVHVAALLRKLSAHVDDSGSQSRTFQEVLAYTLSCVCTSAFSAGIIEATEAEDVMNKLRLLVENSQQTSGFALALGNIVHGLSVCGHGKAEDLGSKLLPAWIRIVLTEGTPTMLCLAALHGMVALVGSEGDVMQLKSEAIQTSHFQGRLNEVIRTLTQVISVSGVIGLQSNAVWLLGHLHLSTLSSSQSRASVPTDYSYLPESSFIGAAIGFFITGGKKGPESVPPSLLKVVMKPIATVGESYQYPPVNWAALLSPLMRLNFGEEIQQLCLEIMVTQAQSSQNAAALLGLWVTPPLIHSLSLNTKRYLLISAPLWIKHISDEQILGFVENLMVAVFKAASPLGSPELCPSALHGLSQAMKLPSPAHHLWSLLSEATGKIFDLLPNKIRRKDLELYISIAKCLLEMTDDDANRIAQVTKSNIEKAAFVKLYLVSQGRFPLVNLTDMLSVAVQHREKEVLAWMILHSLYQARIVSHANTGVLKRMEWLLELMGYIRNVAYQSTSFHNTALDKALDFFLLIFATAVVAWADHTAPLLLGLSASWLPWHQENGPAGPVPSFLGRSPMHRVTLQEVLTLLPNSMALLLQKEPWKEQTQKFIDWLFSIMESPKEALSAQSRDLLKATLLSLRVLPEFKKKAVWTRAYGW</sequence>